<protein>
    <recommendedName>
        <fullName evidence="1">6,7-dimethyl-8-ribityllumazine synthase</fullName>
        <shortName evidence="1">DMRL synthase</shortName>
        <shortName evidence="1">LS</shortName>
        <shortName evidence="1">Lumazine synthase</shortName>
        <ecNumber evidence="1">2.5.1.78</ecNumber>
    </recommendedName>
</protein>
<feature type="chain" id="PRO_1000077247" description="6,7-dimethyl-8-ribityllumazine synthase">
    <location>
        <begin position="1"/>
        <end position="159"/>
    </location>
</feature>
<feature type="active site" description="Proton donor" evidence="1">
    <location>
        <position position="89"/>
    </location>
</feature>
<feature type="binding site" evidence="1">
    <location>
        <position position="22"/>
    </location>
    <ligand>
        <name>5-amino-6-(D-ribitylamino)uracil</name>
        <dbReference type="ChEBI" id="CHEBI:15934"/>
    </ligand>
</feature>
<feature type="binding site" evidence="1">
    <location>
        <begin position="57"/>
        <end position="59"/>
    </location>
    <ligand>
        <name>5-amino-6-(D-ribitylamino)uracil</name>
        <dbReference type="ChEBI" id="CHEBI:15934"/>
    </ligand>
</feature>
<feature type="binding site" evidence="1">
    <location>
        <begin position="81"/>
        <end position="83"/>
    </location>
    <ligand>
        <name>5-amino-6-(D-ribitylamino)uracil</name>
        <dbReference type="ChEBI" id="CHEBI:15934"/>
    </ligand>
</feature>
<feature type="binding site" evidence="1">
    <location>
        <begin position="86"/>
        <end position="87"/>
    </location>
    <ligand>
        <name>(2S)-2-hydroxy-3-oxobutyl phosphate</name>
        <dbReference type="ChEBI" id="CHEBI:58830"/>
    </ligand>
</feature>
<feature type="binding site" evidence="1">
    <location>
        <position position="114"/>
    </location>
    <ligand>
        <name>5-amino-6-(D-ribitylamino)uracil</name>
        <dbReference type="ChEBI" id="CHEBI:15934"/>
    </ligand>
</feature>
<feature type="binding site" evidence="1">
    <location>
        <position position="128"/>
    </location>
    <ligand>
        <name>(2S)-2-hydroxy-3-oxobutyl phosphate</name>
        <dbReference type="ChEBI" id="CHEBI:58830"/>
    </ligand>
</feature>
<accession>A9KYJ1</accession>
<dbReference type="EC" id="2.5.1.78" evidence="1"/>
<dbReference type="EMBL" id="CP000891">
    <property type="protein sequence ID" value="ABX50462.1"/>
    <property type="molecule type" value="Genomic_DNA"/>
</dbReference>
<dbReference type="SMR" id="A9KYJ1"/>
<dbReference type="KEGG" id="sbn:Sbal195_3300"/>
<dbReference type="HOGENOM" id="CLU_089358_1_1_6"/>
<dbReference type="UniPathway" id="UPA00275">
    <property type="reaction ID" value="UER00404"/>
</dbReference>
<dbReference type="Proteomes" id="UP000000770">
    <property type="component" value="Chromosome"/>
</dbReference>
<dbReference type="GO" id="GO:0005829">
    <property type="term" value="C:cytosol"/>
    <property type="evidence" value="ECO:0007669"/>
    <property type="project" value="TreeGrafter"/>
</dbReference>
<dbReference type="GO" id="GO:0009349">
    <property type="term" value="C:riboflavin synthase complex"/>
    <property type="evidence" value="ECO:0007669"/>
    <property type="project" value="InterPro"/>
</dbReference>
<dbReference type="GO" id="GO:0000906">
    <property type="term" value="F:6,7-dimethyl-8-ribityllumazine synthase activity"/>
    <property type="evidence" value="ECO:0007669"/>
    <property type="project" value="UniProtKB-UniRule"/>
</dbReference>
<dbReference type="GO" id="GO:0009231">
    <property type="term" value="P:riboflavin biosynthetic process"/>
    <property type="evidence" value="ECO:0007669"/>
    <property type="project" value="UniProtKB-UniRule"/>
</dbReference>
<dbReference type="CDD" id="cd09209">
    <property type="entry name" value="Lumazine_synthase-I"/>
    <property type="match status" value="1"/>
</dbReference>
<dbReference type="FunFam" id="3.40.50.960:FF:000001">
    <property type="entry name" value="6,7-dimethyl-8-ribityllumazine synthase"/>
    <property type="match status" value="1"/>
</dbReference>
<dbReference type="Gene3D" id="3.40.50.960">
    <property type="entry name" value="Lumazine/riboflavin synthase"/>
    <property type="match status" value="1"/>
</dbReference>
<dbReference type="HAMAP" id="MF_00178">
    <property type="entry name" value="Lumazine_synth"/>
    <property type="match status" value="1"/>
</dbReference>
<dbReference type="InterPro" id="IPR034964">
    <property type="entry name" value="LS"/>
</dbReference>
<dbReference type="InterPro" id="IPR002180">
    <property type="entry name" value="LS/RS"/>
</dbReference>
<dbReference type="InterPro" id="IPR036467">
    <property type="entry name" value="LS/RS_sf"/>
</dbReference>
<dbReference type="NCBIfam" id="TIGR00114">
    <property type="entry name" value="lumazine-synth"/>
    <property type="match status" value="1"/>
</dbReference>
<dbReference type="NCBIfam" id="NF000812">
    <property type="entry name" value="PRK00061.1-4"/>
    <property type="match status" value="1"/>
</dbReference>
<dbReference type="PANTHER" id="PTHR21058:SF0">
    <property type="entry name" value="6,7-DIMETHYL-8-RIBITYLLUMAZINE SYNTHASE"/>
    <property type="match status" value="1"/>
</dbReference>
<dbReference type="PANTHER" id="PTHR21058">
    <property type="entry name" value="6,7-DIMETHYL-8-RIBITYLLUMAZINE SYNTHASE DMRL SYNTHASE LUMAZINE SYNTHASE"/>
    <property type="match status" value="1"/>
</dbReference>
<dbReference type="Pfam" id="PF00885">
    <property type="entry name" value="DMRL_synthase"/>
    <property type="match status" value="1"/>
</dbReference>
<dbReference type="SUPFAM" id="SSF52121">
    <property type="entry name" value="Lumazine synthase"/>
    <property type="match status" value="1"/>
</dbReference>
<organism>
    <name type="scientific">Shewanella baltica (strain OS195)</name>
    <dbReference type="NCBI Taxonomy" id="399599"/>
    <lineage>
        <taxon>Bacteria</taxon>
        <taxon>Pseudomonadati</taxon>
        <taxon>Pseudomonadota</taxon>
        <taxon>Gammaproteobacteria</taxon>
        <taxon>Alteromonadales</taxon>
        <taxon>Shewanellaceae</taxon>
        <taxon>Shewanella</taxon>
    </lineage>
</organism>
<reference key="1">
    <citation type="submission" date="2007-11" db="EMBL/GenBank/DDBJ databases">
        <title>Complete sequence of chromosome of Shewanella baltica OS195.</title>
        <authorList>
            <consortium name="US DOE Joint Genome Institute"/>
            <person name="Copeland A."/>
            <person name="Lucas S."/>
            <person name="Lapidus A."/>
            <person name="Barry K."/>
            <person name="Glavina del Rio T."/>
            <person name="Dalin E."/>
            <person name="Tice H."/>
            <person name="Pitluck S."/>
            <person name="Chain P."/>
            <person name="Malfatti S."/>
            <person name="Shin M."/>
            <person name="Vergez L."/>
            <person name="Schmutz J."/>
            <person name="Larimer F."/>
            <person name="Land M."/>
            <person name="Hauser L."/>
            <person name="Kyrpides N."/>
            <person name="Kim E."/>
            <person name="Brettar I."/>
            <person name="Rodrigues J."/>
            <person name="Konstantinidis K."/>
            <person name="Klappenbach J."/>
            <person name="Hofle M."/>
            <person name="Tiedje J."/>
            <person name="Richardson P."/>
        </authorList>
    </citation>
    <scope>NUCLEOTIDE SEQUENCE [LARGE SCALE GENOMIC DNA]</scope>
    <source>
        <strain>OS195</strain>
    </source>
</reference>
<keyword id="KW-0686">Riboflavin biosynthesis</keyword>
<keyword id="KW-0808">Transferase</keyword>
<evidence type="ECO:0000255" key="1">
    <source>
        <dbReference type="HAMAP-Rule" id="MF_00178"/>
    </source>
</evidence>
<name>RISB_SHEB9</name>
<sequence>MNVVQGNIEAKNAKVAIVISRFNSFLVESLLEGALDTLKRFGQVSDDNITVVRVPGAVELPLAARRVAASGKFDGIIALGAVIRGGTPHFDFVAGECNKGLAQVALEFDLPVAFGVLTTDTIEQAIERSGTKAGNKGGEAALSLLEMVNVLQELEQQLL</sequence>
<proteinExistence type="inferred from homology"/>
<gene>
    <name evidence="1" type="primary">ribH</name>
    <name type="ordered locus">Sbal195_3300</name>
</gene>
<comment type="function">
    <text evidence="1">Catalyzes the formation of 6,7-dimethyl-8-ribityllumazine by condensation of 5-amino-6-(D-ribitylamino)uracil with 3,4-dihydroxy-2-butanone 4-phosphate. This is the penultimate step in the biosynthesis of riboflavin.</text>
</comment>
<comment type="catalytic activity">
    <reaction evidence="1">
        <text>(2S)-2-hydroxy-3-oxobutyl phosphate + 5-amino-6-(D-ribitylamino)uracil = 6,7-dimethyl-8-(1-D-ribityl)lumazine + phosphate + 2 H2O + H(+)</text>
        <dbReference type="Rhea" id="RHEA:26152"/>
        <dbReference type="ChEBI" id="CHEBI:15377"/>
        <dbReference type="ChEBI" id="CHEBI:15378"/>
        <dbReference type="ChEBI" id="CHEBI:15934"/>
        <dbReference type="ChEBI" id="CHEBI:43474"/>
        <dbReference type="ChEBI" id="CHEBI:58201"/>
        <dbReference type="ChEBI" id="CHEBI:58830"/>
        <dbReference type="EC" id="2.5.1.78"/>
    </reaction>
</comment>
<comment type="pathway">
    <text evidence="1">Cofactor biosynthesis; riboflavin biosynthesis; riboflavin from 2-hydroxy-3-oxobutyl phosphate and 5-amino-6-(D-ribitylamino)uracil: step 1/2.</text>
</comment>
<comment type="subunit">
    <text evidence="1">Forms an icosahedral capsid composed of 60 subunits, arranged as a dodecamer of pentamers.</text>
</comment>
<comment type="similarity">
    <text evidence="1">Belongs to the DMRL synthase family.</text>
</comment>